<organism>
    <name type="scientific">Buchnera aphidicola subsp. Baizongia pistaciae (strain Bp)</name>
    <dbReference type="NCBI Taxonomy" id="224915"/>
    <lineage>
        <taxon>Bacteria</taxon>
        <taxon>Pseudomonadati</taxon>
        <taxon>Pseudomonadota</taxon>
        <taxon>Gammaproteobacteria</taxon>
        <taxon>Enterobacterales</taxon>
        <taxon>Erwiniaceae</taxon>
        <taxon>Buchnera</taxon>
    </lineage>
</organism>
<keyword id="KW-0028">Amino-acid biosynthesis</keyword>
<keyword id="KW-0963">Cytoplasm</keyword>
<keyword id="KW-0368">Histidine biosynthesis</keyword>
<keyword id="KW-0378">Hydrolase</keyword>
<keyword id="KW-0456">Lyase</keyword>
<keyword id="KW-0460">Magnesium</keyword>
<keyword id="KW-0479">Metal-binding</keyword>
<keyword id="KW-0511">Multifunctional enzyme</keyword>
<keyword id="KW-1185">Reference proteome</keyword>
<keyword id="KW-0862">Zinc</keyword>
<proteinExistence type="inferred from homology"/>
<dbReference type="EC" id="3.1.3.15" evidence="1"/>
<dbReference type="EC" id="4.2.1.19" evidence="1"/>
<dbReference type="EMBL" id="AE016826">
    <property type="protein sequence ID" value="AAO26831.1"/>
    <property type="molecule type" value="Genomic_DNA"/>
</dbReference>
<dbReference type="RefSeq" id="WP_011091232.1">
    <property type="nucleotide sequence ID" value="NC_004545.1"/>
</dbReference>
<dbReference type="SMR" id="P59454"/>
<dbReference type="STRING" id="224915.bbp_096"/>
<dbReference type="KEGG" id="bab:bbp_096"/>
<dbReference type="eggNOG" id="COG0131">
    <property type="taxonomic scope" value="Bacteria"/>
</dbReference>
<dbReference type="eggNOG" id="COG0241">
    <property type="taxonomic scope" value="Bacteria"/>
</dbReference>
<dbReference type="HOGENOM" id="CLU_044308_0_0_6"/>
<dbReference type="OrthoDB" id="9790411at2"/>
<dbReference type="UniPathway" id="UPA00031">
    <property type="reaction ID" value="UER00011"/>
</dbReference>
<dbReference type="UniPathway" id="UPA00031">
    <property type="reaction ID" value="UER00013"/>
</dbReference>
<dbReference type="Proteomes" id="UP000000601">
    <property type="component" value="Chromosome"/>
</dbReference>
<dbReference type="GO" id="GO:0005737">
    <property type="term" value="C:cytoplasm"/>
    <property type="evidence" value="ECO:0007669"/>
    <property type="project" value="UniProtKB-SubCell"/>
</dbReference>
<dbReference type="GO" id="GO:0004401">
    <property type="term" value="F:histidinol-phosphatase activity"/>
    <property type="evidence" value="ECO:0007669"/>
    <property type="project" value="UniProtKB-UniRule"/>
</dbReference>
<dbReference type="GO" id="GO:0004424">
    <property type="term" value="F:imidazoleglycerol-phosphate dehydratase activity"/>
    <property type="evidence" value="ECO:0007669"/>
    <property type="project" value="UniProtKB-UniRule"/>
</dbReference>
<dbReference type="GO" id="GO:0046872">
    <property type="term" value="F:metal ion binding"/>
    <property type="evidence" value="ECO:0007669"/>
    <property type="project" value="UniProtKB-KW"/>
</dbReference>
<dbReference type="GO" id="GO:0000105">
    <property type="term" value="P:L-histidine biosynthetic process"/>
    <property type="evidence" value="ECO:0007669"/>
    <property type="project" value="UniProtKB-UniRule"/>
</dbReference>
<dbReference type="CDD" id="cd07914">
    <property type="entry name" value="IGPD"/>
    <property type="match status" value="1"/>
</dbReference>
<dbReference type="FunFam" id="3.30.230.40:FF:000001">
    <property type="entry name" value="Imidazoleglycerol-phosphate dehydratase HisB"/>
    <property type="match status" value="1"/>
</dbReference>
<dbReference type="FunFam" id="3.30.230.40:FF:000003">
    <property type="entry name" value="Imidazoleglycerol-phosphate dehydratase HisB"/>
    <property type="match status" value="1"/>
</dbReference>
<dbReference type="Gene3D" id="3.40.50.1000">
    <property type="entry name" value="HAD superfamily/HAD-like"/>
    <property type="match status" value="1"/>
</dbReference>
<dbReference type="Gene3D" id="3.30.230.40">
    <property type="entry name" value="Imidazole glycerol phosphate dehydratase, domain 1"/>
    <property type="match status" value="2"/>
</dbReference>
<dbReference type="HAMAP" id="MF_01022">
    <property type="entry name" value="Bifunc_HisB"/>
    <property type="match status" value="1"/>
</dbReference>
<dbReference type="HAMAP" id="MF_00076">
    <property type="entry name" value="HisB"/>
    <property type="match status" value="1"/>
</dbReference>
<dbReference type="InterPro" id="IPR036412">
    <property type="entry name" value="HAD-like_sf"/>
</dbReference>
<dbReference type="InterPro" id="IPR006549">
    <property type="entry name" value="HAD-SF_hydro_IIIA"/>
</dbReference>
<dbReference type="InterPro" id="IPR023214">
    <property type="entry name" value="HAD_sf"/>
</dbReference>
<dbReference type="InterPro" id="IPR020566">
    <property type="entry name" value="His_synth_bifunc_HisB"/>
</dbReference>
<dbReference type="InterPro" id="IPR005954">
    <property type="entry name" value="HisB_N"/>
</dbReference>
<dbReference type="InterPro" id="IPR006543">
    <property type="entry name" value="Histidinol-phos"/>
</dbReference>
<dbReference type="InterPro" id="IPR038494">
    <property type="entry name" value="IGPD_sf"/>
</dbReference>
<dbReference type="InterPro" id="IPR000807">
    <property type="entry name" value="ImidazoleglycerolP_deHydtase"/>
</dbReference>
<dbReference type="InterPro" id="IPR020565">
    <property type="entry name" value="ImidazoleglycerP_deHydtase_CS"/>
</dbReference>
<dbReference type="InterPro" id="IPR013954">
    <property type="entry name" value="PNK3P"/>
</dbReference>
<dbReference type="InterPro" id="IPR020568">
    <property type="entry name" value="Ribosomal_Su5_D2-typ_SF"/>
</dbReference>
<dbReference type="NCBIfam" id="TIGR01662">
    <property type="entry name" value="HAD-SF-IIIA"/>
    <property type="match status" value="1"/>
</dbReference>
<dbReference type="NCBIfam" id="TIGR01261">
    <property type="entry name" value="hisB_Nterm"/>
    <property type="match status" value="1"/>
</dbReference>
<dbReference type="NCBIfam" id="TIGR01656">
    <property type="entry name" value="Histidinol-ppas"/>
    <property type="match status" value="1"/>
</dbReference>
<dbReference type="NCBIfam" id="NF002111">
    <property type="entry name" value="PRK00951.2-1"/>
    <property type="match status" value="1"/>
</dbReference>
<dbReference type="NCBIfam" id="NF003937">
    <property type="entry name" value="PRK05446.1"/>
    <property type="match status" value="1"/>
</dbReference>
<dbReference type="PANTHER" id="PTHR23133:SF2">
    <property type="entry name" value="IMIDAZOLEGLYCEROL-PHOSPHATE DEHYDRATASE"/>
    <property type="match status" value="1"/>
</dbReference>
<dbReference type="PANTHER" id="PTHR23133">
    <property type="entry name" value="IMIDAZOLEGLYCEROL-PHOSPHATE DEHYDRATASE HIS7"/>
    <property type="match status" value="1"/>
</dbReference>
<dbReference type="Pfam" id="PF00475">
    <property type="entry name" value="IGPD"/>
    <property type="match status" value="1"/>
</dbReference>
<dbReference type="Pfam" id="PF08645">
    <property type="entry name" value="PNK3P"/>
    <property type="match status" value="1"/>
</dbReference>
<dbReference type="SUPFAM" id="SSF56784">
    <property type="entry name" value="HAD-like"/>
    <property type="match status" value="1"/>
</dbReference>
<dbReference type="SUPFAM" id="SSF54211">
    <property type="entry name" value="Ribosomal protein S5 domain 2-like"/>
    <property type="match status" value="2"/>
</dbReference>
<dbReference type="PROSITE" id="PS00954">
    <property type="entry name" value="IGP_DEHYDRATASE_1"/>
    <property type="match status" value="1"/>
</dbReference>
<dbReference type="PROSITE" id="PS00955">
    <property type="entry name" value="IGP_DEHYDRATASE_2"/>
    <property type="match status" value="1"/>
</dbReference>
<protein>
    <recommendedName>
        <fullName evidence="1">Histidine biosynthesis bifunctional protein HisB</fullName>
    </recommendedName>
    <domain>
        <recommendedName>
            <fullName evidence="1">Histidinol-phosphatase</fullName>
            <ecNumber evidence="1">3.1.3.15</ecNumber>
        </recommendedName>
    </domain>
    <domain>
        <recommendedName>
            <fullName evidence="1">Imidazoleglycerol-phosphate dehydratase</fullName>
            <shortName evidence="1">IGPD</shortName>
            <ecNumber evidence="1">4.2.1.19</ecNumber>
        </recommendedName>
    </domain>
</protein>
<feature type="chain" id="PRO_0000158203" description="Histidine biosynthesis bifunctional protein HisB">
    <location>
        <begin position="1"/>
        <end position="357"/>
    </location>
</feature>
<feature type="region of interest" description="Histidinol-phosphatase" evidence="1">
    <location>
        <begin position="1"/>
        <end position="168"/>
    </location>
</feature>
<feature type="region of interest" description="Imidazoleglycerol-phosphate dehydratase" evidence="1">
    <location>
        <begin position="169"/>
        <end position="357"/>
    </location>
</feature>
<feature type="active site" description="Nucleophile" evidence="1">
    <location>
        <position position="9"/>
    </location>
</feature>
<feature type="active site" description="Proton donor" evidence="1">
    <location>
        <position position="11"/>
    </location>
</feature>
<feature type="binding site" evidence="1">
    <location>
        <position position="9"/>
    </location>
    <ligand>
        <name>Mg(2+)</name>
        <dbReference type="ChEBI" id="CHEBI:18420"/>
    </ligand>
</feature>
<feature type="binding site" evidence="1">
    <location>
        <position position="11"/>
    </location>
    <ligand>
        <name>Mg(2+)</name>
        <dbReference type="ChEBI" id="CHEBI:18420"/>
    </ligand>
</feature>
<feature type="binding site" evidence="1">
    <location>
        <position position="93"/>
    </location>
    <ligand>
        <name>Zn(2+)</name>
        <dbReference type="ChEBI" id="CHEBI:29105"/>
    </ligand>
</feature>
<feature type="binding site" evidence="1">
    <location>
        <position position="95"/>
    </location>
    <ligand>
        <name>Zn(2+)</name>
        <dbReference type="ChEBI" id="CHEBI:29105"/>
    </ligand>
</feature>
<feature type="binding site" evidence="1">
    <location>
        <position position="101"/>
    </location>
    <ligand>
        <name>Zn(2+)</name>
        <dbReference type="ChEBI" id="CHEBI:29105"/>
    </ligand>
</feature>
<feature type="binding site" evidence="1">
    <location>
        <position position="103"/>
    </location>
    <ligand>
        <name>Zn(2+)</name>
        <dbReference type="ChEBI" id="CHEBI:29105"/>
    </ligand>
</feature>
<feature type="binding site" evidence="1">
    <location>
        <position position="130"/>
    </location>
    <ligand>
        <name>Mg(2+)</name>
        <dbReference type="ChEBI" id="CHEBI:18420"/>
    </ligand>
</feature>
<name>HIS7_BUCBP</name>
<gene>
    <name evidence="1" type="primary">hisB</name>
    <name type="ordered locus">bbp_096</name>
</gene>
<comment type="catalytic activity">
    <reaction evidence="1">
        <text>D-erythro-1-(imidazol-4-yl)glycerol 3-phosphate = 3-(imidazol-4-yl)-2-oxopropyl phosphate + H2O</text>
        <dbReference type="Rhea" id="RHEA:11040"/>
        <dbReference type="ChEBI" id="CHEBI:15377"/>
        <dbReference type="ChEBI" id="CHEBI:57766"/>
        <dbReference type="ChEBI" id="CHEBI:58278"/>
        <dbReference type="EC" id="4.2.1.19"/>
    </reaction>
</comment>
<comment type="catalytic activity">
    <reaction evidence="1">
        <text>L-histidinol phosphate + H2O = L-histidinol + phosphate</text>
        <dbReference type="Rhea" id="RHEA:14465"/>
        <dbReference type="ChEBI" id="CHEBI:15377"/>
        <dbReference type="ChEBI" id="CHEBI:43474"/>
        <dbReference type="ChEBI" id="CHEBI:57699"/>
        <dbReference type="ChEBI" id="CHEBI:57980"/>
        <dbReference type="EC" id="3.1.3.15"/>
    </reaction>
</comment>
<comment type="cofactor">
    <cofactor evidence="1">
        <name>Mg(2+)</name>
        <dbReference type="ChEBI" id="CHEBI:18420"/>
    </cofactor>
</comment>
<comment type="cofactor">
    <cofactor evidence="1">
        <name>Zn(2+)</name>
        <dbReference type="ChEBI" id="CHEBI:29105"/>
    </cofactor>
</comment>
<comment type="pathway">
    <text evidence="1">Amino-acid biosynthesis; L-histidine biosynthesis; L-histidine from 5-phospho-alpha-D-ribose 1-diphosphate: step 6/9.</text>
</comment>
<comment type="pathway">
    <text evidence="1">Amino-acid biosynthesis; L-histidine biosynthesis; L-histidine from 5-phospho-alpha-D-ribose 1-diphosphate: step 8/9.</text>
</comment>
<comment type="subcellular location">
    <subcellularLocation>
        <location evidence="1">Cytoplasm</location>
    </subcellularLocation>
</comment>
<comment type="similarity">
    <text evidence="1">In the N-terminal section; belongs to the histidinol-phosphatase family.</text>
</comment>
<comment type="similarity">
    <text evidence="1">In the C-terminal section; belongs to the imidazoleglycerol-phosphate dehydratase family.</text>
</comment>
<evidence type="ECO:0000255" key="1">
    <source>
        <dbReference type="HAMAP-Rule" id="MF_01022"/>
    </source>
</evidence>
<accession>P59454</accession>
<reference key="1">
    <citation type="journal article" date="2003" name="Proc. Natl. Acad. Sci. U.S.A.">
        <title>Reductive genome evolution in Buchnera aphidicola.</title>
        <authorList>
            <person name="van Ham R.C.H.J."/>
            <person name="Kamerbeek J."/>
            <person name="Palacios C."/>
            <person name="Rausell C."/>
            <person name="Abascal F."/>
            <person name="Bastolla U."/>
            <person name="Fernandez J.M."/>
            <person name="Jimenez L."/>
            <person name="Postigo M."/>
            <person name="Silva F.J."/>
            <person name="Tamames J."/>
            <person name="Viguera E."/>
            <person name="Latorre A."/>
            <person name="Valencia A."/>
            <person name="Moran F."/>
            <person name="Moya A."/>
        </authorList>
    </citation>
    <scope>NUCLEOTIDE SEQUENCE [LARGE SCALE GENOMIC DNA]</scope>
    <source>
        <strain>Bp</strain>
    </source>
</reference>
<sequence>MSEKVLFIDRDGTLISEPLDNFQVDSFDKLEFKQDVISSLITLKKFNYKFVMVTNQDGLGSKNFPYKSFIRPHEFMIDVFLSQGIKFEEVLICPHELKSGCQCRKPNLGMVQHWLLNDMLDKQHSCVIGDRKTDMILANNMGILGIRYGTKQGNSWSDIVFKLTKKHDRHAKVVRNTKETNVSIEVWLDKQGGSLINTGLNMFNHMLDQIAVHSCIRMKIISSGDICVDDHHTVEDVGIVLGKAILKALGNKLGINRFGFALPMDDSSSYCLLDISGRPFLKFRSYFKHQYIGDMSSEMVRHFFQSLAFAMKCTLHLRSMGINDHHRLESLFKVFGKTLKQAIVVSGKNLPSSKGLL</sequence>